<protein>
    <recommendedName>
        <fullName evidence="1">Probable endonuclease 4</fullName>
        <ecNumber evidence="1">3.1.21.2</ecNumber>
    </recommendedName>
    <alternativeName>
        <fullName evidence="1">Endodeoxyribonuclease IV</fullName>
    </alternativeName>
    <alternativeName>
        <fullName evidence="1">Endonuclease IV</fullName>
    </alternativeName>
</protein>
<accession>Q8Y756</accession>
<keyword id="KW-0227">DNA damage</keyword>
<keyword id="KW-0234">DNA repair</keyword>
<keyword id="KW-0255">Endonuclease</keyword>
<keyword id="KW-0378">Hydrolase</keyword>
<keyword id="KW-0479">Metal-binding</keyword>
<keyword id="KW-0540">Nuclease</keyword>
<keyword id="KW-1185">Reference proteome</keyword>
<keyword id="KW-0862">Zinc</keyword>
<name>END4_LISMO</name>
<sequence>MLRLGSHVSMSGKKMLLGASEEAASYGSNTFMIYTGAPQNTRRKPIEELNIEAGLEHMKAHDMADIVVHAPYIINIGNSVKPETFELGVNFLQSEIERTRALGAKQIVLHPGAHVGEGADKGIKQIIQGLNEALIHDQDVQIALETMAGKGSECGRTFEELAQIIDGVTHNELLSVTFDTCHTHDAGYDIVNDFDGVLNQFDKIVGIDRLKVLHINDSKNERGAHKDRHANIGFGHIGFDALHYIVHHPQLADVPKILETPYVGGDKASKKAPYKWEIAMLKNGEFDPDLLNKIQNS</sequence>
<evidence type="ECO:0000255" key="1">
    <source>
        <dbReference type="HAMAP-Rule" id="MF_00152"/>
    </source>
</evidence>
<feature type="chain" id="PRO_0000190848" description="Probable endonuclease 4">
    <location>
        <begin position="1"/>
        <end position="297"/>
    </location>
</feature>
<feature type="binding site" evidence="1">
    <location>
        <position position="69"/>
    </location>
    <ligand>
        <name>Zn(2+)</name>
        <dbReference type="ChEBI" id="CHEBI:29105"/>
        <label>1</label>
    </ligand>
</feature>
<feature type="binding site" evidence="1">
    <location>
        <position position="110"/>
    </location>
    <ligand>
        <name>Zn(2+)</name>
        <dbReference type="ChEBI" id="CHEBI:29105"/>
        <label>1</label>
    </ligand>
</feature>
<feature type="binding site" evidence="1">
    <location>
        <position position="145"/>
    </location>
    <ligand>
        <name>Zn(2+)</name>
        <dbReference type="ChEBI" id="CHEBI:29105"/>
        <label>1</label>
    </ligand>
</feature>
<feature type="binding site" evidence="1">
    <location>
        <position position="145"/>
    </location>
    <ligand>
        <name>Zn(2+)</name>
        <dbReference type="ChEBI" id="CHEBI:29105"/>
        <label>2</label>
    </ligand>
</feature>
<feature type="binding site" evidence="1">
    <location>
        <position position="179"/>
    </location>
    <ligand>
        <name>Zn(2+)</name>
        <dbReference type="ChEBI" id="CHEBI:29105"/>
        <label>2</label>
    </ligand>
</feature>
<feature type="binding site" evidence="1">
    <location>
        <position position="182"/>
    </location>
    <ligand>
        <name>Zn(2+)</name>
        <dbReference type="ChEBI" id="CHEBI:29105"/>
        <label>3</label>
    </ligand>
</feature>
<feature type="binding site" evidence="1">
    <location>
        <position position="214"/>
    </location>
    <ligand>
        <name>Zn(2+)</name>
        <dbReference type="ChEBI" id="CHEBI:29105"/>
        <label>2</label>
    </ligand>
</feature>
<feature type="binding site" evidence="1">
    <location>
        <position position="227"/>
    </location>
    <ligand>
        <name>Zn(2+)</name>
        <dbReference type="ChEBI" id="CHEBI:29105"/>
        <label>3</label>
    </ligand>
</feature>
<feature type="binding site" evidence="1">
    <location>
        <position position="229"/>
    </location>
    <ligand>
        <name>Zn(2+)</name>
        <dbReference type="ChEBI" id="CHEBI:29105"/>
        <label>3</label>
    </ligand>
</feature>
<feature type="binding site" evidence="1">
    <location>
        <position position="259"/>
    </location>
    <ligand>
        <name>Zn(2+)</name>
        <dbReference type="ChEBI" id="CHEBI:29105"/>
        <label>2</label>
    </ligand>
</feature>
<comment type="function">
    <text evidence="1">Endonuclease IV plays a role in DNA repair. It cleaves phosphodiester bonds at apurinic or apyrimidinic (AP) sites, generating a 3'-hydroxyl group and a 5'-terminal sugar phosphate.</text>
</comment>
<comment type="catalytic activity">
    <reaction evidence="1">
        <text>Endonucleolytic cleavage to 5'-phosphooligonucleotide end-products.</text>
        <dbReference type="EC" id="3.1.21.2"/>
    </reaction>
</comment>
<comment type="cofactor">
    <cofactor evidence="1">
        <name>Zn(2+)</name>
        <dbReference type="ChEBI" id="CHEBI:29105"/>
    </cofactor>
    <text evidence="1">Binds 3 Zn(2+) ions.</text>
</comment>
<comment type="similarity">
    <text evidence="1">Belongs to the AP endonuclease 2 family.</text>
</comment>
<organism>
    <name type="scientific">Listeria monocytogenes serovar 1/2a (strain ATCC BAA-679 / EGD-e)</name>
    <dbReference type="NCBI Taxonomy" id="169963"/>
    <lineage>
        <taxon>Bacteria</taxon>
        <taxon>Bacillati</taxon>
        <taxon>Bacillota</taxon>
        <taxon>Bacilli</taxon>
        <taxon>Bacillales</taxon>
        <taxon>Listeriaceae</taxon>
        <taxon>Listeria</taxon>
    </lineage>
</organism>
<proteinExistence type="inferred from homology"/>
<dbReference type="EC" id="3.1.21.2" evidence="1"/>
<dbReference type="EMBL" id="AL591979">
    <property type="protein sequence ID" value="CAC99527.1"/>
    <property type="molecule type" value="Genomic_DNA"/>
</dbReference>
<dbReference type="PIR" id="AI1255">
    <property type="entry name" value="AI1255"/>
</dbReference>
<dbReference type="RefSeq" id="NP_464974.1">
    <property type="nucleotide sequence ID" value="NC_003210.1"/>
</dbReference>
<dbReference type="RefSeq" id="WP_010990126.1">
    <property type="nucleotide sequence ID" value="NZ_CP149495.1"/>
</dbReference>
<dbReference type="SMR" id="Q8Y756"/>
<dbReference type="STRING" id="169963.gene:17594106"/>
<dbReference type="PaxDb" id="169963-lmo1449"/>
<dbReference type="EnsemblBacteria" id="CAC99527">
    <property type="protein sequence ID" value="CAC99527"/>
    <property type="gene ID" value="CAC99527"/>
</dbReference>
<dbReference type="GeneID" id="984467"/>
<dbReference type="KEGG" id="lmo:lmo1449"/>
<dbReference type="PATRIC" id="fig|169963.11.peg.1488"/>
<dbReference type="eggNOG" id="COG0648">
    <property type="taxonomic scope" value="Bacteria"/>
</dbReference>
<dbReference type="HOGENOM" id="CLU_025885_4_1_9"/>
<dbReference type="OrthoDB" id="9805666at2"/>
<dbReference type="PhylomeDB" id="Q8Y756"/>
<dbReference type="BioCyc" id="LMON169963:LMO1449-MONOMER"/>
<dbReference type="Proteomes" id="UP000000817">
    <property type="component" value="Chromosome"/>
</dbReference>
<dbReference type="GO" id="GO:0008833">
    <property type="term" value="F:deoxyribonuclease IV (phage-T4-induced) activity"/>
    <property type="evidence" value="ECO:0007669"/>
    <property type="project" value="UniProtKB-UniRule"/>
</dbReference>
<dbReference type="GO" id="GO:0003677">
    <property type="term" value="F:DNA binding"/>
    <property type="evidence" value="ECO:0007669"/>
    <property type="project" value="InterPro"/>
</dbReference>
<dbReference type="GO" id="GO:0003906">
    <property type="term" value="F:DNA-(apurinic or apyrimidinic site) endonuclease activity"/>
    <property type="evidence" value="ECO:0000318"/>
    <property type="project" value="GO_Central"/>
</dbReference>
<dbReference type="GO" id="GO:0008081">
    <property type="term" value="F:phosphoric diester hydrolase activity"/>
    <property type="evidence" value="ECO:0000318"/>
    <property type="project" value="GO_Central"/>
</dbReference>
<dbReference type="GO" id="GO:0008270">
    <property type="term" value="F:zinc ion binding"/>
    <property type="evidence" value="ECO:0007669"/>
    <property type="project" value="UniProtKB-UniRule"/>
</dbReference>
<dbReference type="GO" id="GO:0006284">
    <property type="term" value="P:base-excision repair"/>
    <property type="evidence" value="ECO:0000318"/>
    <property type="project" value="GO_Central"/>
</dbReference>
<dbReference type="CDD" id="cd00019">
    <property type="entry name" value="AP2Ec"/>
    <property type="match status" value="1"/>
</dbReference>
<dbReference type="FunFam" id="3.20.20.150:FF:000001">
    <property type="entry name" value="Probable endonuclease 4"/>
    <property type="match status" value="1"/>
</dbReference>
<dbReference type="Gene3D" id="3.20.20.150">
    <property type="entry name" value="Divalent-metal-dependent TIM barrel enzymes"/>
    <property type="match status" value="1"/>
</dbReference>
<dbReference type="HAMAP" id="MF_00152">
    <property type="entry name" value="Nfo"/>
    <property type="match status" value="1"/>
</dbReference>
<dbReference type="InterPro" id="IPR001719">
    <property type="entry name" value="AP_endonuc_2"/>
</dbReference>
<dbReference type="InterPro" id="IPR018246">
    <property type="entry name" value="AP_endonuc_F2_Zn_BS"/>
</dbReference>
<dbReference type="InterPro" id="IPR036237">
    <property type="entry name" value="Xyl_isomerase-like_sf"/>
</dbReference>
<dbReference type="InterPro" id="IPR013022">
    <property type="entry name" value="Xyl_isomerase-like_TIM-brl"/>
</dbReference>
<dbReference type="NCBIfam" id="TIGR00587">
    <property type="entry name" value="nfo"/>
    <property type="match status" value="1"/>
</dbReference>
<dbReference type="NCBIfam" id="NF002196">
    <property type="entry name" value="PRK01060.1-1"/>
    <property type="match status" value="1"/>
</dbReference>
<dbReference type="PANTHER" id="PTHR21445:SF0">
    <property type="entry name" value="APURINIC-APYRIMIDINIC ENDONUCLEASE"/>
    <property type="match status" value="1"/>
</dbReference>
<dbReference type="PANTHER" id="PTHR21445">
    <property type="entry name" value="ENDONUCLEASE IV ENDODEOXYRIBONUCLEASE IV"/>
    <property type="match status" value="1"/>
</dbReference>
<dbReference type="Pfam" id="PF01261">
    <property type="entry name" value="AP_endonuc_2"/>
    <property type="match status" value="1"/>
</dbReference>
<dbReference type="SMART" id="SM00518">
    <property type="entry name" value="AP2Ec"/>
    <property type="match status" value="1"/>
</dbReference>
<dbReference type="SUPFAM" id="SSF51658">
    <property type="entry name" value="Xylose isomerase-like"/>
    <property type="match status" value="1"/>
</dbReference>
<dbReference type="PROSITE" id="PS00729">
    <property type="entry name" value="AP_NUCLEASE_F2_1"/>
    <property type="match status" value="1"/>
</dbReference>
<dbReference type="PROSITE" id="PS00730">
    <property type="entry name" value="AP_NUCLEASE_F2_2"/>
    <property type="match status" value="1"/>
</dbReference>
<dbReference type="PROSITE" id="PS00731">
    <property type="entry name" value="AP_NUCLEASE_F2_3"/>
    <property type="match status" value="1"/>
</dbReference>
<dbReference type="PROSITE" id="PS51432">
    <property type="entry name" value="AP_NUCLEASE_F2_4"/>
    <property type="match status" value="1"/>
</dbReference>
<reference key="1">
    <citation type="journal article" date="2001" name="Science">
        <title>Comparative genomics of Listeria species.</title>
        <authorList>
            <person name="Glaser P."/>
            <person name="Frangeul L."/>
            <person name="Buchrieser C."/>
            <person name="Rusniok C."/>
            <person name="Amend A."/>
            <person name="Baquero F."/>
            <person name="Berche P."/>
            <person name="Bloecker H."/>
            <person name="Brandt P."/>
            <person name="Chakraborty T."/>
            <person name="Charbit A."/>
            <person name="Chetouani F."/>
            <person name="Couve E."/>
            <person name="de Daruvar A."/>
            <person name="Dehoux P."/>
            <person name="Domann E."/>
            <person name="Dominguez-Bernal G."/>
            <person name="Duchaud E."/>
            <person name="Durant L."/>
            <person name="Dussurget O."/>
            <person name="Entian K.-D."/>
            <person name="Fsihi H."/>
            <person name="Garcia-del Portillo F."/>
            <person name="Garrido P."/>
            <person name="Gautier L."/>
            <person name="Goebel W."/>
            <person name="Gomez-Lopez N."/>
            <person name="Hain T."/>
            <person name="Hauf J."/>
            <person name="Jackson D."/>
            <person name="Jones L.-M."/>
            <person name="Kaerst U."/>
            <person name="Kreft J."/>
            <person name="Kuhn M."/>
            <person name="Kunst F."/>
            <person name="Kurapkat G."/>
            <person name="Madueno E."/>
            <person name="Maitournam A."/>
            <person name="Mata Vicente J."/>
            <person name="Ng E."/>
            <person name="Nedjari H."/>
            <person name="Nordsiek G."/>
            <person name="Novella S."/>
            <person name="de Pablos B."/>
            <person name="Perez-Diaz J.-C."/>
            <person name="Purcell R."/>
            <person name="Remmel B."/>
            <person name="Rose M."/>
            <person name="Schlueter T."/>
            <person name="Simoes N."/>
            <person name="Tierrez A."/>
            <person name="Vazquez-Boland J.-A."/>
            <person name="Voss H."/>
            <person name="Wehland J."/>
            <person name="Cossart P."/>
        </authorList>
    </citation>
    <scope>NUCLEOTIDE SEQUENCE [LARGE SCALE GENOMIC DNA]</scope>
    <source>
        <strain>ATCC BAA-679 / EGD-e</strain>
    </source>
</reference>
<gene>
    <name evidence="1" type="primary">nfo</name>
    <name type="ordered locus">lmo1449</name>
</gene>